<dbReference type="EC" id="2.1.1.182" evidence="1"/>
<dbReference type="EMBL" id="AM233362">
    <property type="protein sequence ID" value="CAJ80034.1"/>
    <property type="molecule type" value="Genomic_DNA"/>
</dbReference>
<dbReference type="RefSeq" id="WP_003016977.1">
    <property type="nucleotide sequence ID" value="NZ_CP009694.1"/>
</dbReference>
<dbReference type="SMR" id="Q2A218"/>
<dbReference type="KEGG" id="ftl:FTL_1595"/>
<dbReference type="Proteomes" id="UP000001944">
    <property type="component" value="Chromosome"/>
</dbReference>
<dbReference type="GO" id="GO:0005829">
    <property type="term" value="C:cytosol"/>
    <property type="evidence" value="ECO:0007669"/>
    <property type="project" value="TreeGrafter"/>
</dbReference>
<dbReference type="GO" id="GO:0052908">
    <property type="term" value="F:16S rRNA (adenine(1518)-N(6)/adenine(1519)-N(6))-dimethyltransferase activity"/>
    <property type="evidence" value="ECO:0007669"/>
    <property type="project" value="UniProtKB-EC"/>
</dbReference>
<dbReference type="GO" id="GO:0003723">
    <property type="term" value="F:RNA binding"/>
    <property type="evidence" value="ECO:0007669"/>
    <property type="project" value="UniProtKB-KW"/>
</dbReference>
<dbReference type="FunFam" id="1.10.8.100:FF:000001">
    <property type="entry name" value="Ribosomal RNA small subunit methyltransferase A"/>
    <property type="match status" value="1"/>
</dbReference>
<dbReference type="FunFam" id="3.40.50.150:FF:000023">
    <property type="entry name" value="Ribosomal RNA small subunit methyltransferase A"/>
    <property type="match status" value="1"/>
</dbReference>
<dbReference type="Gene3D" id="1.10.8.100">
    <property type="entry name" value="Ribosomal RNA adenine dimethylase-like, domain 2"/>
    <property type="match status" value="1"/>
</dbReference>
<dbReference type="Gene3D" id="3.40.50.150">
    <property type="entry name" value="Vaccinia Virus protein VP39"/>
    <property type="match status" value="1"/>
</dbReference>
<dbReference type="HAMAP" id="MF_00607">
    <property type="entry name" value="16SrRNA_methyltr_A"/>
    <property type="match status" value="1"/>
</dbReference>
<dbReference type="InterPro" id="IPR001737">
    <property type="entry name" value="KsgA/Erm"/>
</dbReference>
<dbReference type="InterPro" id="IPR023165">
    <property type="entry name" value="rRNA_Ade_diMease-like_C"/>
</dbReference>
<dbReference type="InterPro" id="IPR020596">
    <property type="entry name" value="rRNA_Ade_Mease_Trfase_CS"/>
</dbReference>
<dbReference type="InterPro" id="IPR020598">
    <property type="entry name" value="rRNA_Ade_methylase_Trfase_N"/>
</dbReference>
<dbReference type="InterPro" id="IPR011530">
    <property type="entry name" value="rRNA_adenine_dimethylase"/>
</dbReference>
<dbReference type="InterPro" id="IPR029063">
    <property type="entry name" value="SAM-dependent_MTases_sf"/>
</dbReference>
<dbReference type="NCBIfam" id="TIGR00755">
    <property type="entry name" value="ksgA"/>
    <property type="match status" value="1"/>
</dbReference>
<dbReference type="PANTHER" id="PTHR11727">
    <property type="entry name" value="DIMETHYLADENOSINE TRANSFERASE"/>
    <property type="match status" value="1"/>
</dbReference>
<dbReference type="PANTHER" id="PTHR11727:SF7">
    <property type="entry name" value="DIMETHYLADENOSINE TRANSFERASE-RELATED"/>
    <property type="match status" value="1"/>
</dbReference>
<dbReference type="Pfam" id="PF00398">
    <property type="entry name" value="RrnaAD"/>
    <property type="match status" value="1"/>
</dbReference>
<dbReference type="SMART" id="SM00650">
    <property type="entry name" value="rADc"/>
    <property type="match status" value="1"/>
</dbReference>
<dbReference type="SUPFAM" id="SSF53335">
    <property type="entry name" value="S-adenosyl-L-methionine-dependent methyltransferases"/>
    <property type="match status" value="1"/>
</dbReference>
<dbReference type="PROSITE" id="PS01131">
    <property type="entry name" value="RRNA_A_DIMETH"/>
    <property type="match status" value="1"/>
</dbReference>
<dbReference type="PROSITE" id="PS51689">
    <property type="entry name" value="SAM_RNA_A_N6_MT"/>
    <property type="match status" value="1"/>
</dbReference>
<accession>Q2A218</accession>
<feature type="chain" id="PRO_0000257291" description="Ribosomal RNA small subunit methyltransferase A">
    <location>
        <begin position="1"/>
        <end position="262"/>
    </location>
</feature>
<feature type="binding site" evidence="1">
    <location>
        <position position="14"/>
    </location>
    <ligand>
        <name>S-adenosyl-L-methionine</name>
        <dbReference type="ChEBI" id="CHEBI:59789"/>
    </ligand>
</feature>
<feature type="binding site" evidence="1">
    <location>
        <position position="16"/>
    </location>
    <ligand>
        <name>S-adenosyl-L-methionine</name>
        <dbReference type="ChEBI" id="CHEBI:59789"/>
    </ligand>
</feature>
<feature type="binding site" evidence="1">
    <location>
        <position position="41"/>
    </location>
    <ligand>
        <name>S-adenosyl-L-methionine</name>
        <dbReference type="ChEBI" id="CHEBI:59789"/>
    </ligand>
</feature>
<feature type="binding site" evidence="1">
    <location>
        <position position="62"/>
    </location>
    <ligand>
        <name>S-adenosyl-L-methionine</name>
        <dbReference type="ChEBI" id="CHEBI:59789"/>
    </ligand>
</feature>
<feature type="binding site" evidence="1">
    <location>
        <position position="87"/>
    </location>
    <ligand>
        <name>S-adenosyl-L-methionine</name>
        <dbReference type="ChEBI" id="CHEBI:59789"/>
    </ligand>
</feature>
<feature type="binding site" evidence="1">
    <location>
        <position position="109"/>
    </location>
    <ligand>
        <name>S-adenosyl-L-methionine</name>
        <dbReference type="ChEBI" id="CHEBI:59789"/>
    </ligand>
</feature>
<keyword id="KW-0963">Cytoplasm</keyword>
<keyword id="KW-0489">Methyltransferase</keyword>
<keyword id="KW-1185">Reference proteome</keyword>
<keyword id="KW-0694">RNA-binding</keyword>
<keyword id="KW-0698">rRNA processing</keyword>
<keyword id="KW-0949">S-adenosyl-L-methionine</keyword>
<keyword id="KW-0808">Transferase</keyword>
<proteinExistence type="inferred from homology"/>
<name>RSMA_FRATH</name>
<organism>
    <name type="scientific">Francisella tularensis subsp. holarctica (strain LVS)</name>
    <dbReference type="NCBI Taxonomy" id="376619"/>
    <lineage>
        <taxon>Bacteria</taxon>
        <taxon>Pseudomonadati</taxon>
        <taxon>Pseudomonadota</taxon>
        <taxon>Gammaproteobacteria</taxon>
        <taxon>Thiotrichales</taxon>
        <taxon>Francisellaceae</taxon>
        <taxon>Francisella</taxon>
    </lineage>
</organism>
<protein>
    <recommendedName>
        <fullName evidence="1">Ribosomal RNA small subunit methyltransferase A</fullName>
        <ecNumber evidence="1">2.1.1.182</ecNumber>
    </recommendedName>
    <alternativeName>
        <fullName evidence="1">16S rRNA (adenine(1518)-N(6)/adenine(1519)-N(6))-dimethyltransferase</fullName>
    </alternativeName>
    <alternativeName>
        <fullName evidence="1">16S rRNA dimethyladenosine transferase</fullName>
    </alternativeName>
    <alternativeName>
        <fullName evidence="1">16S rRNA dimethylase</fullName>
    </alternativeName>
    <alternativeName>
        <fullName evidence="1">S-adenosylmethionine-6-N', N'-adenosyl(rRNA) dimethyltransferase</fullName>
    </alternativeName>
</protein>
<evidence type="ECO:0000255" key="1">
    <source>
        <dbReference type="HAMAP-Rule" id="MF_00607"/>
    </source>
</evidence>
<gene>
    <name evidence="1" type="primary">rsmA</name>
    <name evidence="1" type="synonym">ksgA</name>
    <name type="ordered locus">FTL_1595</name>
</gene>
<sequence>MQYKTKAKKSLGQNFLQDENIIRKIVQLANIKKHDIVVEIGPGLGALTRYLLSSSNNVSVVEFDASVIDTLIANCQKYGTPHIYNQDFLKFDISSLENSSNQKIKLIGNLPYNISSPILFKVIKDSDKIVDAHFMLQKEVVERIVSLPNSKSYGRLSVILQYHFDCSMILKIPPEVFYPQPKVDSAILRLKPKNSKELLKNYNFFEEIVKQSFAQRRKTLHNNLKSILKERKIDPSTLPVDTNLRAENLSVGDFVSLANFLS</sequence>
<comment type="function">
    <text evidence="1">Specifically dimethylates two adjacent adenosines (A1518 and A1519) in the loop of a conserved hairpin near the 3'-end of 16S rRNA in the 30S particle. May play a critical role in biogenesis of 30S subunits.</text>
</comment>
<comment type="catalytic activity">
    <reaction evidence="1">
        <text>adenosine(1518)/adenosine(1519) in 16S rRNA + 4 S-adenosyl-L-methionine = N(6)-dimethyladenosine(1518)/N(6)-dimethyladenosine(1519) in 16S rRNA + 4 S-adenosyl-L-homocysteine + 4 H(+)</text>
        <dbReference type="Rhea" id="RHEA:19609"/>
        <dbReference type="Rhea" id="RHEA-COMP:10232"/>
        <dbReference type="Rhea" id="RHEA-COMP:10233"/>
        <dbReference type="ChEBI" id="CHEBI:15378"/>
        <dbReference type="ChEBI" id="CHEBI:57856"/>
        <dbReference type="ChEBI" id="CHEBI:59789"/>
        <dbReference type="ChEBI" id="CHEBI:74411"/>
        <dbReference type="ChEBI" id="CHEBI:74493"/>
        <dbReference type="EC" id="2.1.1.182"/>
    </reaction>
</comment>
<comment type="subcellular location">
    <subcellularLocation>
        <location evidence="1">Cytoplasm</location>
    </subcellularLocation>
</comment>
<comment type="similarity">
    <text evidence="1">Belongs to the class I-like SAM-binding methyltransferase superfamily. rRNA adenine N(6)-methyltransferase family. RsmA subfamily.</text>
</comment>
<reference key="1">
    <citation type="submission" date="2006-03" db="EMBL/GenBank/DDBJ databases">
        <title>Complete genome sequence of Francisella tularensis LVS (Live Vaccine Strain).</title>
        <authorList>
            <person name="Chain P."/>
            <person name="Larimer F."/>
            <person name="Land M."/>
            <person name="Stilwagen S."/>
            <person name="Larsson P."/>
            <person name="Bearden S."/>
            <person name="Chu M."/>
            <person name="Oyston P."/>
            <person name="Forsman M."/>
            <person name="Andersson S."/>
            <person name="Lindler L."/>
            <person name="Titball R."/>
            <person name="Garcia E."/>
        </authorList>
    </citation>
    <scope>NUCLEOTIDE SEQUENCE [LARGE SCALE GENOMIC DNA]</scope>
    <source>
        <strain>LVS</strain>
    </source>
</reference>